<evidence type="ECO:0000250" key="1"/>
<evidence type="ECO:0000250" key="2">
    <source>
        <dbReference type="UniProtKB" id="O04983"/>
    </source>
</evidence>
<evidence type="ECO:0000255" key="3"/>
<evidence type="ECO:0000255" key="4">
    <source>
        <dbReference type="PROSITE-ProRule" id="PRU00409"/>
    </source>
</evidence>
<evidence type="ECO:0000305" key="5"/>
<name>ACCC_POPEU</name>
<sequence>ILVANRGEIAVRLLEEAPSPALTPELRITAYLPSGGPFVR</sequence>
<dbReference type="EC" id="6.3.4.14" evidence="2"/>
<dbReference type="UniPathway" id="UPA00655">
    <property type="reaction ID" value="UER00711"/>
</dbReference>
<dbReference type="Proteomes" id="UP000694918">
    <property type="component" value="Unplaced"/>
</dbReference>
<dbReference type="GO" id="GO:0003989">
    <property type="term" value="F:acetyl-CoA carboxylase activity"/>
    <property type="evidence" value="ECO:0007669"/>
    <property type="project" value="UniProtKB-EC"/>
</dbReference>
<dbReference type="GO" id="GO:0005524">
    <property type="term" value="F:ATP binding"/>
    <property type="evidence" value="ECO:0007669"/>
    <property type="project" value="UniProtKB-KW"/>
</dbReference>
<dbReference type="GO" id="GO:0004075">
    <property type="term" value="F:biotin carboxylase activity"/>
    <property type="evidence" value="ECO:0007669"/>
    <property type="project" value="UniProtKB-EC"/>
</dbReference>
<dbReference type="GO" id="GO:0006633">
    <property type="term" value="P:fatty acid biosynthetic process"/>
    <property type="evidence" value="ECO:0007669"/>
    <property type="project" value="UniProtKB-KW"/>
</dbReference>
<dbReference type="GO" id="GO:2001295">
    <property type="term" value="P:malonyl-CoA biosynthetic process"/>
    <property type="evidence" value="ECO:0007669"/>
    <property type="project" value="UniProtKB-UniPathway"/>
</dbReference>
<proteinExistence type="evidence at protein level"/>
<accession>P84546</accession>
<keyword id="KW-0067">ATP-binding</keyword>
<keyword id="KW-0092">Biotin</keyword>
<keyword id="KW-0903">Direct protein sequencing</keyword>
<keyword id="KW-0275">Fatty acid biosynthesis</keyword>
<keyword id="KW-0276">Fatty acid metabolism</keyword>
<keyword id="KW-0436">Ligase</keyword>
<keyword id="KW-0444">Lipid biosynthesis</keyword>
<keyword id="KW-0443">Lipid metabolism</keyword>
<keyword id="KW-0460">Magnesium</keyword>
<keyword id="KW-0464">Manganese</keyword>
<keyword id="KW-0547">Nucleotide-binding</keyword>
<keyword id="KW-1185">Reference proteome</keyword>
<feature type="chain" id="PRO_0000146795" description="Biotin carboxylase">
    <location>
        <begin position="1" status="less than"/>
        <end position="40" status="greater than"/>
    </location>
</feature>
<feature type="domain" description="Biotin carboxylation" evidence="3">
    <location>
        <begin position="1" status="less than"/>
        <end position="40" status="greater than"/>
    </location>
</feature>
<feature type="domain" description="ATP-grasp" evidence="4">
    <location>
        <begin position="13" status="less than"/>
        <end position="27" status="greater than"/>
    </location>
</feature>
<feature type="non-consecutive residues" evidence="5">
    <location>
        <begin position="12"/>
        <end position="13"/>
    </location>
</feature>
<feature type="non-consecutive residues" evidence="5">
    <location>
        <begin position="27"/>
        <end position="28"/>
    </location>
</feature>
<feature type="non-terminal residue">
    <location>
        <position position="1"/>
    </location>
</feature>
<feature type="non-terminal residue">
    <location>
        <position position="40"/>
    </location>
</feature>
<reference key="1">
    <citation type="journal article" date="2006" name="Ann. Bot.">
        <title>Proteome profiling of Populus euphratica Oliv. upon heat stress.</title>
        <authorList>
            <person name="Ferreira S."/>
            <person name="Hjernoe K."/>
            <person name="Larsen M."/>
            <person name="Wingsle G."/>
            <person name="Larsen P."/>
            <person name="Fey S."/>
            <person name="Roepstorff P."/>
            <person name="Pais M.S."/>
        </authorList>
    </citation>
    <scope>PROTEIN SEQUENCE</scope>
    <source>
        <tissue>Leaf</tissue>
    </source>
</reference>
<comment type="function">
    <text evidence="2">This protein is a component of the acetyl coenzyme A carboxylase complex; first, biotin carboxylase catalyzes the carboxylation of the carrier protein and then the transcarboxylase transfers the carboxyl group to form malonyl-CoA.</text>
</comment>
<comment type="catalytic activity">
    <reaction evidence="2">
        <text>N(6)-biotinyl-L-lysyl-[protein] + hydrogencarbonate + ATP = N(6)-carboxybiotinyl-L-lysyl-[protein] + ADP + phosphate + H(+)</text>
        <dbReference type="Rhea" id="RHEA:13501"/>
        <dbReference type="Rhea" id="RHEA-COMP:10505"/>
        <dbReference type="Rhea" id="RHEA-COMP:10506"/>
        <dbReference type="ChEBI" id="CHEBI:15378"/>
        <dbReference type="ChEBI" id="CHEBI:17544"/>
        <dbReference type="ChEBI" id="CHEBI:30616"/>
        <dbReference type="ChEBI" id="CHEBI:43474"/>
        <dbReference type="ChEBI" id="CHEBI:83144"/>
        <dbReference type="ChEBI" id="CHEBI:83145"/>
        <dbReference type="ChEBI" id="CHEBI:456216"/>
        <dbReference type="EC" id="6.3.4.14"/>
    </reaction>
</comment>
<comment type="cofactor">
    <cofactor evidence="1">
        <name>Mg(2+)</name>
        <dbReference type="ChEBI" id="CHEBI:18420"/>
    </cofactor>
    <cofactor evidence="1">
        <name>Mn(2+)</name>
        <dbReference type="ChEBI" id="CHEBI:29035"/>
    </cofactor>
    <text evidence="1">Binds 2 magnesium or manganese ions per subunit.</text>
</comment>
<comment type="pathway">
    <text>Lipid metabolism; malonyl-CoA biosynthesis; malonyl-CoA from acetyl-CoA: step 1/1.</text>
</comment>
<comment type="subunit">
    <text evidence="1">Acetyl-CoA carboxylase is a heterohexamer of biotin carboxyl carrier protein, biotin carboxylase and the two subunits of carboxyl transferase in a 2:2 complex.</text>
</comment>
<organism>
    <name type="scientific">Populus euphratica</name>
    <name type="common">Euphrates poplar</name>
    <dbReference type="NCBI Taxonomy" id="75702"/>
    <lineage>
        <taxon>Eukaryota</taxon>
        <taxon>Viridiplantae</taxon>
        <taxon>Streptophyta</taxon>
        <taxon>Embryophyta</taxon>
        <taxon>Tracheophyta</taxon>
        <taxon>Spermatophyta</taxon>
        <taxon>Magnoliopsida</taxon>
        <taxon>eudicotyledons</taxon>
        <taxon>Gunneridae</taxon>
        <taxon>Pentapetalae</taxon>
        <taxon>rosids</taxon>
        <taxon>fabids</taxon>
        <taxon>Malpighiales</taxon>
        <taxon>Salicaceae</taxon>
        <taxon>Saliceae</taxon>
        <taxon>Populus</taxon>
    </lineage>
</organism>
<protein>
    <recommendedName>
        <fullName>Biotin carboxylase</fullName>
        <ecNumber evidence="2">6.3.4.14</ecNumber>
    </recommendedName>
    <alternativeName>
        <fullName evidence="5">Acetyl-coenzyme A carboxylase biotin carboxylase subunit A</fullName>
    </alternativeName>
</protein>